<accession>C0PYX3</accession>
<proteinExistence type="inferred from homology"/>
<protein>
    <recommendedName>
        <fullName evidence="1">Bifunctional protein HldE</fullName>
    </recommendedName>
    <domain>
        <recommendedName>
            <fullName evidence="1">D-beta-D-heptose 7-phosphate kinase</fullName>
            <ecNumber evidence="1">2.7.1.167</ecNumber>
        </recommendedName>
        <alternativeName>
            <fullName evidence="1">D-beta-D-heptose 7-phosphotransferase</fullName>
        </alternativeName>
        <alternativeName>
            <fullName evidence="1">D-glycero-beta-D-manno-heptose-7-phosphate kinase</fullName>
        </alternativeName>
    </domain>
    <domain>
        <recommendedName>
            <fullName evidence="1">D-beta-D-heptose 1-phosphate adenylyltransferase</fullName>
            <ecNumber evidence="1">2.7.7.70</ecNumber>
        </recommendedName>
        <alternativeName>
            <fullName evidence="1">D-glycero-beta-D-manno-heptose 1-phosphate adenylyltransferase</fullName>
        </alternativeName>
    </domain>
</protein>
<dbReference type="EC" id="2.7.1.167" evidence="1"/>
<dbReference type="EC" id="2.7.7.70" evidence="1"/>
<dbReference type="EMBL" id="CP000857">
    <property type="protein sequence ID" value="ACN47361.1"/>
    <property type="molecule type" value="Genomic_DNA"/>
</dbReference>
<dbReference type="RefSeq" id="WP_000867682.1">
    <property type="nucleotide sequence ID" value="NC_012125.1"/>
</dbReference>
<dbReference type="SMR" id="C0PYX3"/>
<dbReference type="KEGG" id="sei:SPC_3276"/>
<dbReference type="HOGENOM" id="CLU_021150_2_1_6"/>
<dbReference type="UniPathway" id="UPA00356">
    <property type="reaction ID" value="UER00437"/>
</dbReference>
<dbReference type="UniPathway" id="UPA00356">
    <property type="reaction ID" value="UER00439"/>
</dbReference>
<dbReference type="Proteomes" id="UP000001599">
    <property type="component" value="Chromosome"/>
</dbReference>
<dbReference type="GO" id="GO:0005829">
    <property type="term" value="C:cytosol"/>
    <property type="evidence" value="ECO:0007669"/>
    <property type="project" value="TreeGrafter"/>
</dbReference>
<dbReference type="GO" id="GO:0005524">
    <property type="term" value="F:ATP binding"/>
    <property type="evidence" value="ECO:0007669"/>
    <property type="project" value="UniProtKB-UniRule"/>
</dbReference>
<dbReference type="GO" id="GO:0033785">
    <property type="term" value="F:heptose 7-phosphate kinase activity"/>
    <property type="evidence" value="ECO:0007669"/>
    <property type="project" value="UniProtKB-UniRule"/>
</dbReference>
<dbReference type="GO" id="GO:0033786">
    <property type="term" value="F:heptose-1-phosphate adenylyltransferase activity"/>
    <property type="evidence" value="ECO:0007669"/>
    <property type="project" value="UniProtKB-UniRule"/>
</dbReference>
<dbReference type="GO" id="GO:0016773">
    <property type="term" value="F:phosphotransferase activity, alcohol group as acceptor"/>
    <property type="evidence" value="ECO:0007669"/>
    <property type="project" value="InterPro"/>
</dbReference>
<dbReference type="GO" id="GO:0097171">
    <property type="term" value="P:ADP-L-glycero-beta-D-manno-heptose biosynthetic process"/>
    <property type="evidence" value="ECO:0007669"/>
    <property type="project" value="UniProtKB-UniPathway"/>
</dbReference>
<dbReference type="CDD" id="cd01172">
    <property type="entry name" value="RfaE_like"/>
    <property type="match status" value="1"/>
</dbReference>
<dbReference type="FunFam" id="3.40.1190.20:FF:000002">
    <property type="entry name" value="Bifunctional protein HldE"/>
    <property type="match status" value="1"/>
</dbReference>
<dbReference type="FunFam" id="3.40.50.620:FF:000028">
    <property type="entry name" value="Bifunctional protein HldE"/>
    <property type="match status" value="1"/>
</dbReference>
<dbReference type="Gene3D" id="3.40.1190.20">
    <property type="match status" value="1"/>
</dbReference>
<dbReference type="Gene3D" id="3.40.50.620">
    <property type="entry name" value="HUPs"/>
    <property type="match status" value="1"/>
</dbReference>
<dbReference type="HAMAP" id="MF_01603">
    <property type="entry name" value="HldE"/>
    <property type="match status" value="1"/>
</dbReference>
<dbReference type="InterPro" id="IPR023030">
    <property type="entry name" value="Bifunc_HldE"/>
</dbReference>
<dbReference type="InterPro" id="IPR002173">
    <property type="entry name" value="Carboh/pur_kinase_PfkB_CS"/>
</dbReference>
<dbReference type="InterPro" id="IPR004821">
    <property type="entry name" value="Cyt_trans-like"/>
</dbReference>
<dbReference type="InterPro" id="IPR011611">
    <property type="entry name" value="PfkB_dom"/>
</dbReference>
<dbReference type="InterPro" id="IPR011913">
    <property type="entry name" value="RfaE_dom_I"/>
</dbReference>
<dbReference type="InterPro" id="IPR011914">
    <property type="entry name" value="RfaE_dom_II"/>
</dbReference>
<dbReference type="InterPro" id="IPR029056">
    <property type="entry name" value="Ribokinase-like"/>
</dbReference>
<dbReference type="InterPro" id="IPR014729">
    <property type="entry name" value="Rossmann-like_a/b/a_fold"/>
</dbReference>
<dbReference type="NCBIfam" id="TIGR00125">
    <property type="entry name" value="cyt_tran_rel"/>
    <property type="match status" value="1"/>
</dbReference>
<dbReference type="NCBIfam" id="NF008454">
    <property type="entry name" value="PRK11316.1"/>
    <property type="match status" value="1"/>
</dbReference>
<dbReference type="NCBIfam" id="TIGR02198">
    <property type="entry name" value="rfaE_dom_I"/>
    <property type="match status" value="1"/>
</dbReference>
<dbReference type="NCBIfam" id="TIGR02199">
    <property type="entry name" value="rfaE_dom_II"/>
    <property type="match status" value="1"/>
</dbReference>
<dbReference type="PANTHER" id="PTHR46969">
    <property type="entry name" value="BIFUNCTIONAL PROTEIN HLDE"/>
    <property type="match status" value="1"/>
</dbReference>
<dbReference type="PANTHER" id="PTHR46969:SF1">
    <property type="entry name" value="BIFUNCTIONAL PROTEIN HLDE"/>
    <property type="match status" value="1"/>
</dbReference>
<dbReference type="Pfam" id="PF01467">
    <property type="entry name" value="CTP_transf_like"/>
    <property type="match status" value="1"/>
</dbReference>
<dbReference type="Pfam" id="PF00294">
    <property type="entry name" value="PfkB"/>
    <property type="match status" value="1"/>
</dbReference>
<dbReference type="SUPFAM" id="SSF52374">
    <property type="entry name" value="Nucleotidylyl transferase"/>
    <property type="match status" value="1"/>
</dbReference>
<dbReference type="SUPFAM" id="SSF53613">
    <property type="entry name" value="Ribokinase-like"/>
    <property type="match status" value="1"/>
</dbReference>
<dbReference type="PROSITE" id="PS00583">
    <property type="entry name" value="PFKB_KINASES_1"/>
    <property type="match status" value="1"/>
</dbReference>
<evidence type="ECO:0000255" key="1">
    <source>
        <dbReference type="HAMAP-Rule" id="MF_01603"/>
    </source>
</evidence>
<sequence>MKVNLPAFERAGVMVVGDVMLDRYWYGPTCRISPEAPVPVVKVNTVEERPGGAANVAMNIASLGANARLVGLTGIDDAARALSKTLAEVNVKCDFVSVPTHPTITKLRVLSRNQQLIRLDFEEGFEGVDPQPLHERINQALGSIGALVLSDYAKGALTSVQTMISLARQAGVPVLIDPKGTDFERYRGATLLTPNLSEFEAVAGKCKSEDELVERGMKLIADYDLSALLVTRSEQGMTLLQPNKAPLHMPTQAQEVYDVTGAGDTVIGVLAATLAAGNTLEEACYFANAAAGVVVGKLGTSTVSPIELENAVRGRADTGFGVMTEEELRQAVASARKRGEKVVMTNGVFDILHAGHVSYLANARKLGDRLIVAVNSDASTKRLKGESRPVNPLEQRMIVLGALESVDWVVSFEEDTPQRLIAGILPDLLVKGGDYKPEEIAGSEEVWANGGEVMVLNFEDGCSTTNIIKKIQTESEK</sequence>
<gene>
    <name evidence="1" type="primary">hldE</name>
    <name type="ordered locus">SPC_3276</name>
</gene>
<feature type="chain" id="PRO_1000185821" description="Bifunctional protein HldE">
    <location>
        <begin position="1"/>
        <end position="477"/>
    </location>
</feature>
<feature type="region of interest" description="Ribokinase">
    <location>
        <begin position="1"/>
        <end position="318"/>
    </location>
</feature>
<feature type="region of interest" description="Cytidylyltransferase">
    <location>
        <begin position="344"/>
        <end position="477"/>
    </location>
</feature>
<feature type="active site" evidence="1">
    <location>
        <position position="264"/>
    </location>
</feature>
<feature type="binding site" evidence="1">
    <location>
        <begin position="195"/>
        <end position="198"/>
    </location>
    <ligand>
        <name>ATP</name>
        <dbReference type="ChEBI" id="CHEBI:30616"/>
    </ligand>
</feature>
<comment type="function">
    <text evidence="1">Catalyzes the phosphorylation of D-glycero-D-manno-heptose 7-phosphate at the C-1 position to selectively form D-glycero-beta-D-manno-heptose-1,7-bisphosphate.</text>
</comment>
<comment type="function">
    <text evidence="1">Catalyzes the ADP transfer from ATP to D-glycero-beta-D-manno-heptose 1-phosphate, yielding ADP-D-glycero-beta-D-manno-heptose.</text>
</comment>
<comment type="catalytic activity">
    <reaction evidence="1">
        <text>D-glycero-beta-D-manno-heptose 7-phosphate + ATP = D-glycero-beta-D-manno-heptose 1,7-bisphosphate + ADP + H(+)</text>
        <dbReference type="Rhea" id="RHEA:27473"/>
        <dbReference type="ChEBI" id="CHEBI:15378"/>
        <dbReference type="ChEBI" id="CHEBI:30616"/>
        <dbReference type="ChEBI" id="CHEBI:60204"/>
        <dbReference type="ChEBI" id="CHEBI:60208"/>
        <dbReference type="ChEBI" id="CHEBI:456216"/>
        <dbReference type="EC" id="2.7.1.167"/>
    </reaction>
</comment>
<comment type="catalytic activity">
    <reaction evidence="1">
        <text>D-glycero-beta-D-manno-heptose 1-phosphate + ATP + H(+) = ADP-D-glycero-beta-D-manno-heptose + diphosphate</text>
        <dbReference type="Rhea" id="RHEA:27465"/>
        <dbReference type="ChEBI" id="CHEBI:15378"/>
        <dbReference type="ChEBI" id="CHEBI:30616"/>
        <dbReference type="ChEBI" id="CHEBI:33019"/>
        <dbReference type="ChEBI" id="CHEBI:59967"/>
        <dbReference type="ChEBI" id="CHEBI:61593"/>
        <dbReference type="EC" id="2.7.7.70"/>
    </reaction>
</comment>
<comment type="pathway">
    <text evidence="1">Nucleotide-sugar biosynthesis; ADP-L-glycero-beta-D-manno-heptose biosynthesis; ADP-L-glycero-beta-D-manno-heptose from D-glycero-beta-D-manno-heptose 7-phosphate: step 1/4.</text>
</comment>
<comment type="pathway">
    <text evidence="1">Nucleotide-sugar biosynthesis; ADP-L-glycero-beta-D-manno-heptose biosynthesis; ADP-L-glycero-beta-D-manno-heptose from D-glycero-beta-D-manno-heptose 7-phosphate: step 3/4.</text>
</comment>
<comment type="subunit">
    <text evidence="1">Homodimer.</text>
</comment>
<comment type="similarity">
    <text evidence="1">In the N-terminal section; belongs to the carbohydrate kinase PfkB family.</text>
</comment>
<comment type="similarity">
    <text evidence="1">In the C-terminal section; belongs to the cytidylyltransferase family.</text>
</comment>
<organism>
    <name type="scientific">Salmonella paratyphi C (strain RKS4594)</name>
    <dbReference type="NCBI Taxonomy" id="476213"/>
    <lineage>
        <taxon>Bacteria</taxon>
        <taxon>Pseudomonadati</taxon>
        <taxon>Pseudomonadota</taxon>
        <taxon>Gammaproteobacteria</taxon>
        <taxon>Enterobacterales</taxon>
        <taxon>Enterobacteriaceae</taxon>
        <taxon>Salmonella</taxon>
    </lineage>
</organism>
<name>HLDE_SALPC</name>
<keyword id="KW-0067">ATP-binding</keyword>
<keyword id="KW-0119">Carbohydrate metabolism</keyword>
<keyword id="KW-0418">Kinase</keyword>
<keyword id="KW-0511">Multifunctional enzyme</keyword>
<keyword id="KW-0547">Nucleotide-binding</keyword>
<keyword id="KW-0548">Nucleotidyltransferase</keyword>
<keyword id="KW-0808">Transferase</keyword>
<reference key="1">
    <citation type="journal article" date="2009" name="PLoS ONE">
        <title>Salmonella paratyphi C: genetic divergence from Salmonella choleraesuis and pathogenic convergence with Salmonella typhi.</title>
        <authorList>
            <person name="Liu W.-Q."/>
            <person name="Feng Y."/>
            <person name="Wang Y."/>
            <person name="Zou Q.-H."/>
            <person name="Chen F."/>
            <person name="Guo J.-T."/>
            <person name="Peng Y.-H."/>
            <person name="Jin Y."/>
            <person name="Li Y.-G."/>
            <person name="Hu S.-N."/>
            <person name="Johnston R.N."/>
            <person name="Liu G.-R."/>
            <person name="Liu S.-L."/>
        </authorList>
    </citation>
    <scope>NUCLEOTIDE SEQUENCE [LARGE SCALE GENOMIC DNA]</scope>
    <source>
        <strain>RKS4594</strain>
    </source>
</reference>